<gene>
    <name evidence="1" type="primary">mfnB</name>
    <name type="ordered locus">MM_1114</name>
</gene>
<protein>
    <recommendedName>
        <fullName evidence="1">(5-formylfuran-3-yl)methyl phosphate synthase</fullName>
        <ecNumber evidence="1">4.2.3.153</ecNumber>
    </recommendedName>
    <alternativeName>
        <fullName evidence="1">4-(hydroxymethyl)-2-furancarboxaldehyde-phosphate synthase</fullName>
        <shortName evidence="1">4-HFC-P synthase</shortName>
    </alternativeName>
</protein>
<accession>Q8PXV2</accession>
<sequence length="234" mass="24942">MKLLVSPINSEEAIIASIGGADIVDVKNPKEGSLGANFPWVIREVKAVVNGRQPISATIGDFNYKPGTAALAALGAAVAGADYIKVGLYDIQTESQALELLTKITRAVKDYNPLKKVVASGYSDYKRINSISPLLLPAVAAEAGVDVVMVDTGVKDGKSTFEFMDEKELKEFTDLAHSYGLENAIAGSLKFEDIPLLERIGPDIIGVRGMVCGGDRSTSIRQELVEKLVAECQA</sequence>
<feature type="chain" id="PRO_0000134867" description="(5-formylfuran-3-yl)methyl phosphate synthase">
    <location>
        <begin position="1"/>
        <end position="234"/>
    </location>
</feature>
<feature type="active site" description="Schiff-base intermediate with substrate" evidence="1">
    <location>
        <position position="27"/>
    </location>
</feature>
<feature type="active site" description="Proton acceptor" evidence="1">
    <location>
        <position position="85"/>
    </location>
</feature>
<reference key="1">
    <citation type="journal article" date="2002" name="J. Mol. Microbiol. Biotechnol.">
        <title>The genome of Methanosarcina mazei: evidence for lateral gene transfer between Bacteria and Archaea.</title>
        <authorList>
            <person name="Deppenmeier U."/>
            <person name="Johann A."/>
            <person name="Hartsch T."/>
            <person name="Merkl R."/>
            <person name="Schmitz R.A."/>
            <person name="Martinez-Arias R."/>
            <person name="Henne A."/>
            <person name="Wiezer A."/>
            <person name="Baeumer S."/>
            <person name="Jacobi C."/>
            <person name="Brueggemann H."/>
            <person name="Lienard T."/>
            <person name="Christmann A."/>
            <person name="Boemecke M."/>
            <person name="Steckel S."/>
            <person name="Bhattacharyya A."/>
            <person name="Lykidis A."/>
            <person name="Overbeek R."/>
            <person name="Klenk H.-P."/>
            <person name="Gunsalus R.P."/>
            <person name="Fritz H.-J."/>
            <person name="Gottschalk G."/>
        </authorList>
    </citation>
    <scope>NUCLEOTIDE SEQUENCE [LARGE SCALE GENOMIC DNA]</scope>
    <source>
        <strain>ATCC BAA-159 / DSM 3647 / Goe1 / Go1 / JCM 11833 / OCM 88</strain>
    </source>
</reference>
<keyword id="KW-0456">Lyase</keyword>
<keyword id="KW-0704">Schiff base</keyword>
<evidence type="ECO:0000255" key="1">
    <source>
        <dbReference type="HAMAP-Rule" id="MF_00681"/>
    </source>
</evidence>
<dbReference type="EC" id="4.2.3.153" evidence="1"/>
<dbReference type="EMBL" id="AE008384">
    <property type="protein sequence ID" value="AAM30810.1"/>
    <property type="molecule type" value="Genomic_DNA"/>
</dbReference>
<dbReference type="RefSeq" id="WP_011033063.1">
    <property type="nucleotide sequence ID" value="NC_003901.1"/>
</dbReference>
<dbReference type="SMR" id="Q8PXV2"/>
<dbReference type="KEGG" id="mma:MM_1114"/>
<dbReference type="PATRIC" id="fig|192952.21.peg.1303"/>
<dbReference type="eggNOG" id="arCOG04482">
    <property type="taxonomic scope" value="Archaea"/>
</dbReference>
<dbReference type="HOGENOM" id="CLU_068659_0_0_2"/>
<dbReference type="UniPathway" id="UPA00080"/>
<dbReference type="Proteomes" id="UP000000595">
    <property type="component" value="Chromosome"/>
</dbReference>
<dbReference type="GO" id="GO:0016830">
    <property type="term" value="F:carbon-carbon lyase activity"/>
    <property type="evidence" value="ECO:0007669"/>
    <property type="project" value="UniProtKB-UniRule"/>
</dbReference>
<dbReference type="GO" id="GO:2001120">
    <property type="term" value="P:methanofuran biosynthetic process"/>
    <property type="evidence" value="ECO:0007669"/>
    <property type="project" value="UniProtKB-UniRule"/>
</dbReference>
<dbReference type="HAMAP" id="MF_00681">
    <property type="entry name" value="MfnB"/>
    <property type="match status" value="1"/>
</dbReference>
<dbReference type="InterPro" id="IPR007565">
    <property type="entry name" value="4HFCP_synth"/>
</dbReference>
<dbReference type="InterPro" id="IPR035081">
    <property type="entry name" value="4HFCP_synth_arc"/>
</dbReference>
<dbReference type="InterPro" id="IPR011060">
    <property type="entry name" value="RibuloseP-bd_barrel"/>
</dbReference>
<dbReference type="NCBIfam" id="NF002575">
    <property type="entry name" value="PRK02227.1-3"/>
    <property type="match status" value="1"/>
</dbReference>
<dbReference type="Pfam" id="PF04476">
    <property type="entry name" value="4HFCP_synth"/>
    <property type="match status" value="1"/>
</dbReference>
<dbReference type="PIRSF" id="PIRSF015957">
    <property type="entry name" value="UCP015957"/>
    <property type="match status" value="1"/>
</dbReference>
<dbReference type="SUPFAM" id="SSF51366">
    <property type="entry name" value="Ribulose-phoshate binding barrel"/>
    <property type="match status" value="1"/>
</dbReference>
<name>MFNB_METMA</name>
<proteinExistence type="inferred from homology"/>
<comment type="function">
    <text evidence="1">Catalyzes the formation of 4-(hydroxymethyl)-2-furancarboxaldehyde phosphate (4-HFC-P) from two molecules of glyceraldehyde-3-P (GA-3-P).</text>
</comment>
<comment type="catalytic activity">
    <reaction evidence="1">
        <text>2 D-glyceraldehyde 3-phosphate = 4-(hydroxymethyl)-2-furancarboxaldehyde phosphate + phosphate + 2 H2O</text>
        <dbReference type="Rhea" id="RHEA:43536"/>
        <dbReference type="ChEBI" id="CHEBI:15377"/>
        <dbReference type="ChEBI" id="CHEBI:43474"/>
        <dbReference type="ChEBI" id="CHEBI:59776"/>
        <dbReference type="ChEBI" id="CHEBI:83407"/>
        <dbReference type="EC" id="4.2.3.153"/>
    </reaction>
</comment>
<comment type="pathway">
    <text evidence="1">Cofactor biosynthesis; methanofuran biosynthesis.</text>
</comment>
<comment type="similarity">
    <text evidence="1">Belongs to the MfnB family.</text>
</comment>
<organism>
    <name type="scientific">Methanosarcina mazei (strain ATCC BAA-159 / DSM 3647 / Goe1 / Go1 / JCM 11833 / OCM 88)</name>
    <name type="common">Methanosarcina frisia</name>
    <dbReference type="NCBI Taxonomy" id="192952"/>
    <lineage>
        <taxon>Archaea</taxon>
        <taxon>Methanobacteriati</taxon>
        <taxon>Methanobacteriota</taxon>
        <taxon>Stenosarchaea group</taxon>
        <taxon>Methanomicrobia</taxon>
        <taxon>Methanosarcinales</taxon>
        <taxon>Methanosarcinaceae</taxon>
        <taxon>Methanosarcina</taxon>
    </lineage>
</organism>